<accession>Q8K912</accession>
<gene>
    <name evidence="1" type="primary">mtlD</name>
    <name type="ordered locus">BUsg_551</name>
</gene>
<dbReference type="EC" id="1.1.1.17" evidence="1"/>
<dbReference type="EMBL" id="AE013218">
    <property type="protein sequence ID" value="AAM68089.1"/>
    <property type="molecule type" value="Genomic_DNA"/>
</dbReference>
<dbReference type="RefSeq" id="WP_011054055.1">
    <property type="nucleotide sequence ID" value="NC_004061.1"/>
</dbReference>
<dbReference type="SMR" id="Q8K912"/>
<dbReference type="STRING" id="198804.BUsg_551"/>
<dbReference type="GeneID" id="93004028"/>
<dbReference type="KEGG" id="bas:BUsg_551"/>
<dbReference type="eggNOG" id="COG0246">
    <property type="taxonomic scope" value="Bacteria"/>
</dbReference>
<dbReference type="HOGENOM" id="CLU_036089_2_0_6"/>
<dbReference type="Proteomes" id="UP000000416">
    <property type="component" value="Chromosome"/>
</dbReference>
<dbReference type="GO" id="GO:0005829">
    <property type="term" value="C:cytosol"/>
    <property type="evidence" value="ECO:0007669"/>
    <property type="project" value="TreeGrafter"/>
</dbReference>
<dbReference type="GO" id="GO:0008926">
    <property type="term" value="F:mannitol-1-phosphate 5-dehydrogenase activity"/>
    <property type="evidence" value="ECO:0007669"/>
    <property type="project" value="UniProtKB-UniRule"/>
</dbReference>
<dbReference type="GO" id="GO:0019592">
    <property type="term" value="P:mannitol catabolic process"/>
    <property type="evidence" value="ECO:0007669"/>
    <property type="project" value="TreeGrafter"/>
</dbReference>
<dbReference type="Gene3D" id="1.10.1040.10">
    <property type="entry name" value="N-(1-d-carboxylethyl)-l-norvaline Dehydrogenase, domain 2"/>
    <property type="match status" value="1"/>
</dbReference>
<dbReference type="Gene3D" id="3.40.50.720">
    <property type="entry name" value="NAD(P)-binding Rossmann-like Domain"/>
    <property type="match status" value="1"/>
</dbReference>
<dbReference type="HAMAP" id="MF_00196">
    <property type="entry name" value="Mannitol_dehydrog"/>
    <property type="match status" value="1"/>
</dbReference>
<dbReference type="InterPro" id="IPR008927">
    <property type="entry name" value="6-PGluconate_DH-like_C_sf"/>
</dbReference>
<dbReference type="InterPro" id="IPR013328">
    <property type="entry name" value="6PGD_dom2"/>
</dbReference>
<dbReference type="InterPro" id="IPR023028">
    <property type="entry name" value="Mannitol_1_phos_5_DH"/>
</dbReference>
<dbReference type="InterPro" id="IPR000669">
    <property type="entry name" value="Mannitol_DH"/>
</dbReference>
<dbReference type="InterPro" id="IPR013118">
    <property type="entry name" value="Mannitol_DH_C"/>
</dbReference>
<dbReference type="InterPro" id="IPR013131">
    <property type="entry name" value="Mannitol_DH_N"/>
</dbReference>
<dbReference type="InterPro" id="IPR036291">
    <property type="entry name" value="NAD(P)-bd_dom_sf"/>
</dbReference>
<dbReference type="NCBIfam" id="NF002646">
    <property type="entry name" value="PRK02318.1-2"/>
    <property type="match status" value="1"/>
</dbReference>
<dbReference type="NCBIfam" id="NF002650">
    <property type="entry name" value="PRK02318.2-2"/>
    <property type="match status" value="1"/>
</dbReference>
<dbReference type="NCBIfam" id="NF002652">
    <property type="entry name" value="PRK02318.2-5"/>
    <property type="match status" value="1"/>
</dbReference>
<dbReference type="PANTHER" id="PTHR30524:SF0">
    <property type="entry name" value="ALTRONATE OXIDOREDUCTASE-RELATED"/>
    <property type="match status" value="1"/>
</dbReference>
<dbReference type="PANTHER" id="PTHR30524">
    <property type="entry name" value="MANNITOL-1-PHOSPHATE 5-DEHYDROGENASE"/>
    <property type="match status" value="1"/>
</dbReference>
<dbReference type="Pfam" id="PF01232">
    <property type="entry name" value="Mannitol_dh"/>
    <property type="match status" value="1"/>
</dbReference>
<dbReference type="Pfam" id="PF08125">
    <property type="entry name" value="Mannitol_dh_C"/>
    <property type="match status" value="1"/>
</dbReference>
<dbReference type="PRINTS" id="PR00084">
    <property type="entry name" value="MTLDHDRGNASE"/>
</dbReference>
<dbReference type="SUPFAM" id="SSF48179">
    <property type="entry name" value="6-phosphogluconate dehydrogenase C-terminal domain-like"/>
    <property type="match status" value="1"/>
</dbReference>
<dbReference type="SUPFAM" id="SSF51735">
    <property type="entry name" value="NAD(P)-binding Rossmann-fold domains"/>
    <property type="match status" value="1"/>
</dbReference>
<feature type="chain" id="PRO_0000170700" description="Mannitol-1-phosphate 5-dehydrogenase">
    <location>
        <begin position="1"/>
        <end position="388"/>
    </location>
</feature>
<feature type="binding site" evidence="1">
    <location>
        <begin position="3"/>
        <end position="14"/>
    </location>
    <ligand>
        <name>NAD(+)</name>
        <dbReference type="ChEBI" id="CHEBI:57540"/>
    </ligand>
</feature>
<sequence length="388" mass="44572">MRALHFGAGNIGRGFIARVLLKSDFNLIFSDVDQNIINAINNYKKYKIKLIDNSFEKIININNISAINSYDPNVLNVISHVDLITTAAGVNALYKIASILIEGIILRINLKCKKPLNIIACENKIKATSFLKKIIFDKIPLKYHDYFDEYIGFVDCTIDTIVPTFSSFKEENSLFVIAENFKEWIVDVNQFKGMVPKIIDMTLSDNLTSFIDRKILTLNTGHAIAAYLGLMKNYKNICEAMSDFSIQRIVKDAMYESGLVLIKRYNFNKKDHLSYIDKIFVRFKNPFILDKLERIARNPLQKLSKDERLIQPFVEAMKYNLPYFNLVKGIAAALHYRNINDIQSIKLSSLIKEEGLEETLVKVCKLNANSNEIRIIISEYHSIIKDFL</sequence>
<proteinExistence type="inferred from homology"/>
<organism>
    <name type="scientific">Buchnera aphidicola subsp. Schizaphis graminum (strain Sg)</name>
    <dbReference type="NCBI Taxonomy" id="198804"/>
    <lineage>
        <taxon>Bacteria</taxon>
        <taxon>Pseudomonadati</taxon>
        <taxon>Pseudomonadota</taxon>
        <taxon>Gammaproteobacteria</taxon>
        <taxon>Enterobacterales</taxon>
        <taxon>Erwiniaceae</taxon>
        <taxon>Buchnera</taxon>
    </lineage>
</organism>
<protein>
    <recommendedName>
        <fullName evidence="1">Mannitol-1-phosphate 5-dehydrogenase</fullName>
        <ecNumber evidence="1">1.1.1.17</ecNumber>
    </recommendedName>
</protein>
<evidence type="ECO:0000255" key="1">
    <source>
        <dbReference type="HAMAP-Rule" id="MF_00196"/>
    </source>
</evidence>
<reference key="1">
    <citation type="journal article" date="2002" name="Science">
        <title>50 million years of genomic stasis in endosymbiotic bacteria.</title>
        <authorList>
            <person name="Tamas I."/>
            <person name="Klasson L."/>
            <person name="Canbaeck B."/>
            <person name="Naeslund A.K."/>
            <person name="Eriksson A.-S."/>
            <person name="Wernegreen J.J."/>
            <person name="Sandstroem J.P."/>
            <person name="Moran N.A."/>
            <person name="Andersson S.G.E."/>
        </authorList>
    </citation>
    <scope>NUCLEOTIDE SEQUENCE [LARGE SCALE GENOMIC DNA]</scope>
    <source>
        <strain>Sg</strain>
    </source>
</reference>
<name>MTLD_BUCAP</name>
<keyword id="KW-0520">NAD</keyword>
<keyword id="KW-0560">Oxidoreductase</keyword>
<comment type="catalytic activity">
    <reaction evidence="1">
        <text>D-mannitol 1-phosphate + NAD(+) = beta-D-fructose 6-phosphate + NADH + H(+)</text>
        <dbReference type="Rhea" id="RHEA:19661"/>
        <dbReference type="ChEBI" id="CHEBI:15378"/>
        <dbReference type="ChEBI" id="CHEBI:57540"/>
        <dbReference type="ChEBI" id="CHEBI:57634"/>
        <dbReference type="ChEBI" id="CHEBI:57945"/>
        <dbReference type="ChEBI" id="CHEBI:61381"/>
        <dbReference type="EC" id="1.1.1.17"/>
    </reaction>
</comment>
<comment type="similarity">
    <text evidence="1">Belongs to the mannitol dehydrogenase family.</text>
</comment>